<evidence type="ECO:0000250" key="1">
    <source>
        <dbReference type="UniProtKB" id="P02699"/>
    </source>
</evidence>
<evidence type="ECO:0000250" key="2">
    <source>
        <dbReference type="UniProtKB" id="P08100"/>
    </source>
</evidence>
<evidence type="ECO:0000250" key="3">
    <source>
        <dbReference type="UniProtKB" id="P32309"/>
    </source>
</evidence>
<evidence type="ECO:0000250" key="4">
    <source>
        <dbReference type="UniProtKB" id="P35359"/>
    </source>
</evidence>
<evidence type="ECO:0000255" key="5"/>
<evidence type="ECO:0000255" key="6">
    <source>
        <dbReference type="PROSITE-ProRule" id="PRU00521"/>
    </source>
</evidence>
<evidence type="ECO:0000256" key="7">
    <source>
        <dbReference type="SAM" id="MobiDB-lite"/>
    </source>
</evidence>
<evidence type="ECO:0000305" key="8"/>
<dbReference type="EMBL" id="U57542">
    <property type="protein sequence ID" value="AAB39528.1"/>
    <property type="molecule type" value="mRNA"/>
</dbReference>
<dbReference type="SMR" id="P79901"/>
<dbReference type="GlyCosmos" id="P79901">
    <property type="glycosylation" value="2 sites, No reported glycans"/>
</dbReference>
<dbReference type="GO" id="GO:0016020">
    <property type="term" value="C:membrane"/>
    <property type="evidence" value="ECO:0000250"/>
    <property type="project" value="UniProtKB"/>
</dbReference>
<dbReference type="GO" id="GO:0097381">
    <property type="term" value="C:photoreceptor disc membrane"/>
    <property type="evidence" value="ECO:0000250"/>
    <property type="project" value="UniProtKB"/>
</dbReference>
<dbReference type="GO" id="GO:0005886">
    <property type="term" value="C:plasma membrane"/>
    <property type="evidence" value="ECO:0000250"/>
    <property type="project" value="UniProtKB"/>
</dbReference>
<dbReference type="GO" id="GO:0005502">
    <property type="term" value="F:11-cis retinal binding"/>
    <property type="evidence" value="ECO:0000250"/>
    <property type="project" value="UniProtKB"/>
</dbReference>
<dbReference type="GO" id="GO:0008020">
    <property type="term" value="F:G protein-coupled photoreceptor activity"/>
    <property type="evidence" value="ECO:0000250"/>
    <property type="project" value="UniProtKB"/>
</dbReference>
<dbReference type="GO" id="GO:0016038">
    <property type="term" value="P:absorption of visible light"/>
    <property type="evidence" value="ECO:0000250"/>
    <property type="project" value="UniProtKB"/>
</dbReference>
<dbReference type="GO" id="GO:0016056">
    <property type="term" value="P:G protein-coupled opsin signaling pathway"/>
    <property type="evidence" value="ECO:0000250"/>
    <property type="project" value="UniProtKB"/>
</dbReference>
<dbReference type="GO" id="GO:0007601">
    <property type="term" value="P:visual perception"/>
    <property type="evidence" value="ECO:0007669"/>
    <property type="project" value="UniProtKB-KW"/>
</dbReference>
<dbReference type="CDD" id="cd15080">
    <property type="entry name" value="7tmA_MWS_opsin"/>
    <property type="match status" value="1"/>
</dbReference>
<dbReference type="FunFam" id="1.20.1070.10:FF:000018">
    <property type="entry name" value="Rhodopsin"/>
    <property type="match status" value="1"/>
</dbReference>
<dbReference type="Gene3D" id="1.20.1070.10">
    <property type="entry name" value="Rhodopsin 7-helix transmembrane proteins"/>
    <property type="match status" value="1"/>
</dbReference>
<dbReference type="InterPro" id="IPR050125">
    <property type="entry name" value="GPCR_opsins"/>
</dbReference>
<dbReference type="InterPro" id="IPR000276">
    <property type="entry name" value="GPCR_Rhodpsn"/>
</dbReference>
<dbReference type="InterPro" id="IPR017452">
    <property type="entry name" value="GPCR_Rhodpsn_7TM"/>
</dbReference>
<dbReference type="InterPro" id="IPR001760">
    <property type="entry name" value="Opsin"/>
</dbReference>
<dbReference type="InterPro" id="IPR027430">
    <property type="entry name" value="Retinal_BS"/>
</dbReference>
<dbReference type="InterPro" id="IPR000732">
    <property type="entry name" value="Rhodopsin"/>
</dbReference>
<dbReference type="InterPro" id="IPR019477">
    <property type="entry name" value="Rhodopsin_N"/>
</dbReference>
<dbReference type="PANTHER" id="PTHR24240">
    <property type="entry name" value="OPSIN"/>
    <property type="match status" value="1"/>
</dbReference>
<dbReference type="Pfam" id="PF00001">
    <property type="entry name" value="7tm_1"/>
    <property type="match status" value="1"/>
</dbReference>
<dbReference type="Pfam" id="PF10413">
    <property type="entry name" value="Rhodopsin_N"/>
    <property type="match status" value="1"/>
</dbReference>
<dbReference type="PRINTS" id="PR00237">
    <property type="entry name" value="GPCRRHODOPSN"/>
</dbReference>
<dbReference type="PRINTS" id="PR00238">
    <property type="entry name" value="OPSIN"/>
</dbReference>
<dbReference type="PRINTS" id="PR00579">
    <property type="entry name" value="RHODOPSIN"/>
</dbReference>
<dbReference type="SUPFAM" id="SSF81321">
    <property type="entry name" value="Family A G protein-coupled receptor-like"/>
    <property type="match status" value="1"/>
</dbReference>
<dbReference type="PROSITE" id="PS00237">
    <property type="entry name" value="G_PROTEIN_RECEP_F1_1"/>
    <property type="match status" value="1"/>
</dbReference>
<dbReference type="PROSITE" id="PS50262">
    <property type="entry name" value="G_PROTEIN_RECEP_F1_2"/>
    <property type="match status" value="1"/>
</dbReference>
<dbReference type="PROSITE" id="PS00238">
    <property type="entry name" value="OPSIN"/>
    <property type="match status" value="1"/>
</dbReference>
<feature type="chain" id="PRO_0000197711" description="Rhodopsin">
    <location>
        <begin position="1" status="less than"/>
        <end position="348"/>
    </location>
</feature>
<feature type="topological domain" description="Extracellular" evidence="8">
    <location>
        <begin position="1" status="less than"/>
        <end position="33"/>
    </location>
</feature>
<feature type="transmembrane region" description="Helical; Name=1" evidence="1">
    <location>
        <begin position="34"/>
        <end position="58"/>
    </location>
</feature>
<feature type="topological domain" description="Cytoplasmic" evidence="8">
    <location>
        <begin position="59"/>
        <end position="70"/>
    </location>
</feature>
<feature type="transmembrane region" description="Helical; Name=2" evidence="1">
    <location>
        <begin position="71"/>
        <end position="93"/>
    </location>
</feature>
<feature type="topological domain" description="Extracellular" evidence="8">
    <location>
        <begin position="94"/>
        <end position="107"/>
    </location>
</feature>
<feature type="transmembrane region" description="Helical; Name=3" evidence="1">
    <location>
        <begin position="108"/>
        <end position="130"/>
    </location>
</feature>
<feature type="topological domain" description="Cytoplasmic" evidence="8">
    <location>
        <begin position="131"/>
        <end position="149"/>
    </location>
</feature>
<feature type="transmembrane region" description="Helical; Name=4" evidence="1">
    <location>
        <begin position="150"/>
        <end position="170"/>
    </location>
</feature>
<feature type="topological domain" description="Extracellular" evidence="8">
    <location>
        <begin position="171"/>
        <end position="199"/>
    </location>
</feature>
<feature type="transmembrane region" description="Helical; Name=5" evidence="1">
    <location>
        <begin position="200"/>
        <end position="221"/>
    </location>
</feature>
<feature type="topological domain" description="Cytoplasmic" evidence="8">
    <location>
        <begin position="222"/>
        <end position="249"/>
    </location>
</feature>
<feature type="transmembrane region" description="Helical; Name=6" evidence="1">
    <location>
        <begin position="250"/>
        <end position="271"/>
    </location>
</feature>
<feature type="topological domain" description="Extracellular" evidence="8">
    <location>
        <begin position="272"/>
        <end position="283"/>
    </location>
</feature>
<feature type="transmembrane region" description="Helical; Name=7" evidence="1">
    <location>
        <begin position="284"/>
        <end position="305"/>
    </location>
</feature>
<feature type="topological domain" description="Cytoplasmic" evidence="8">
    <location>
        <begin position="306"/>
        <end position="348"/>
    </location>
</feature>
<feature type="region of interest" description="Disordered" evidence="7">
    <location>
        <begin position="327"/>
        <end position="348"/>
    </location>
</feature>
<feature type="short sequence motif" description="'Ionic lock' involved in activated form stabilization" evidence="1">
    <location>
        <begin position="131"/>
        <end position="133"/>
    </location>
</feature>
<feature type="compositionally biased region" description="Low complexity" evidence="7">
    <location>
        <begin position="332"/>
        <end position="348"/>
    </location>
</feature>
<feature type="site" description="Plays an important role in the conformation switch to the active conformation" evidence="1">
    <location>
        <position position="110"/>
    </location>
</feature>
<feature type="modified residue" description="N6-(retinylidene)lysine" evidence="1">
    <location>
        <position position="293"/>
    </location>
</feature>
<feature type="lipid moiety-binding region" description="S-palmitoyl cysteine" evidence="1">
    <location>
        <position position="320"/>
    </location>
</feature>
<feature type="glycosylation site" description="N-linked (GlcNAc...) asparagine" evidence="5">
    <location>
        <position position="12"/>
    </location>
</feature>
<feature type="glycosylation site" description="N-linked (GlcNAc...) asparagine" evidence="5">
    <location>
        <position position="197"/>
    </location>
</feature>
<feature type="disulfide bond" evidence="6">
    <location>
        <begin position="107"/>
        <end position="184"/>
    </location>
</feature>
<feature type="non-terminal residue">
    <location>
        <position position="1"/>
    </location>
</feature>
<keyword id="KW-0966">Cell projection</keyword>
<keyword id="KW-0157">Chromophore</keyword>
<keyword id="KW-1015">Disulfide bond</keyword>
<keyword id="KW-0297">G-protein coupled receptor</keyword>
<keyword id="KW-0325">Glycoprotein</keyword>
<keyword id="KW-0449">Lipoprotein</keyword>
<keyword id="KW-0472">Membrane</keyword>
<keyword id="KW-0564">Palmitate</keyword>
<keyword id="KW-0597">Phosphoprotein</keyword>
<keyword id="KW-0600">Photoreceptor protein</keyword>
<keyword id="KW-0675">Receptor</keyword>
<keyword id="KW-0681">Retinal protein</keyword>
<keyword id="KW-0716">Sensory transduction</keyword>
<keyword id="KW-0807">Transducer</keyword>
<keyword id="KW-0812">Transmembrane</keyword>
<keyword id="KW-1133">Transmembrane helix</keyword>
<keyword id="KW-0844">Vision</keyword>
<protein>
    <recommendedName>
        <fullName>Rhodopsin</fullName>
    </recommendedName>
</protein>
<accession>P79901</accession>
<organism>
    <name type="scientific">Sargocentron microstoma</name>
    <name type="common">Smallmouth squirrelfish</name>
    <name type="synonym">Adioryx microstomus</name>
    <dbReference type="NCBI Taxonomy" id="47710"/>
    <lineage>
        <taxon>Eukaryota</taxon>
        <taxon>Metazoa</taxon>
        <taxon>Chordata</taxon>
        <taxon>Craniata</taxon>
        <taxon>Vertebrata</taxon>
        <taxon>Euteleostomi</taxon>
        <taxon>Actinopterygii</taxon>
        <taxon>Neopterygii</taxon>
        <taxon>Teleostei</taxon>
        <taxon>Neoteleostei</taxon>
        <taxon>Acanthomorphata</taxon>
        <taxon>Holocentriformes</taxon>
        <taxon>Holocentridae</taxon>
        <taxon>Sargocentron</taxon>
    </lineage>
</organism>
<sequence>TEGPYFYIPMVNTTGIVRSPYEYPQYYLVNPAAYAMLGAYMFFLIIVGFPVNFMTLYVTLEHKKLRTPLNYILLNLAVADLFMVIGGFTTTIYTSMHGYFVLGRLGCNIEGFFATLGGMISLWSLAVLAIERWVVVCKPISNFRFGENHAIMGVSLTWAMALACTVPPLVGWSRYIPEGMQCSCGIDYYTRAEGFNNESFVLYMFFCHFTIPLTIIFFCYGRLLCAVKEAAAAQQESETTQRAEREVTRMVIIMVIGFLICWLPYASVAWFIFTHQGSEFGPLFMTIPAFFAKSSSIYNPMIYICMNKQFRHCMITTLFCGKNPFEGEEEGASSTKTEASSASSVSPA</sequence>
<gene>
    <name type="primary">rho</name>
</gene>
<reference key="1">
    <citation type="submission" date="1997-01" db="EMBL/GenBank/DDBJ databases">
        <title>Molecular phylogeny of 11 holocentrid fishes (Order Beryciformes) inferred from rhodopsin cDNA and cytochrome b.</title>
        <authorList>
            <person name="Toller W.W."/>
            <person name="Moses K."/>
            <person name="McFall-Ngai M.J."/>
        </authorList>
    </citation>
    <scope>NUCLEOTIDE SEQUENCE [MRNA]</scope>
    <source>
        <tissue>Eye</tissue>
    </source>
</reference>
<name>OPSD_SARMI</name>
<comment type="function">
    <text evidence="1 2 3">Photoreceptor required for image-forming vision at low light intensity. While most salt water fish species use retinal as chromophore, most freshwater fish use 3-dehydroretinal, or a mixture of retinal and 3-dehydroretinal (By similarity). Light-induced isomerization of 11-cis to all-trans retinal triggers a conformational change that activates signaling via G-proteins. Subsequent receptor phosphorylation mediates displacement of the bound G-protein alpha subunit by arrestin and terminates signaling (By similarity).</text>
</comment>
<comment type="subcellular location">
    <subcellularLocation>
        <location evidence="2">Membrane</location>
        <topology evidence="2">Multi-pass membrane protein</topology>
    </subcellularLocation>
    <subcellularLocation>
        <location evidence="4">Cell projection</location>
        <location evidence="4">Cilium</location>
        <location evidence="4">Photoreceptor outer segment</location>
    </subcellularLocation>
    <text evidence="2">Synthesized in the inner segment (IS) of rod photoreceptor cells before vectorial transport to disk membranes in the rod outer segment (OS) photosensory cilia.</text>
</comment>
<comment type="PTM">
    <text evidence="1">Phosphorylated on some or all of the serine and threonine residues present in the C-terminal region.</text>
</comment>
<comment type="PTM">
    <text evidence="1">Contains one covalently linked retinal chromophore.</text>
</comment>
<comment type="similarity">
    <text evidence="6">Belongs to the G-protein coupled receptor 1 family. Opsin subfamily.</text>
</comment>
<proteinExistence type="evidence at transcript level"/>